<protein>
    <recommendedName>
        <fullName evidence="1">UvrABC system protein C</fullName>
        <shortName evidence="1">Protein UvrC</shortName>
    </recommendedName>
    <alternativeName>
        <fullName evidence="1">Excinuclease ABC subunit C</fullName>
    </alternativeName>
</protein>
<proteinExistence type="inferred from homology"/>
<gene>
    <name evidence="1" type="primary">uvrC</name>
    <name type="ordered locus">DNO_0305</name>
</gene>
<reference key="1">
    <citation type="journal article" date="2007" name="Nat. Biotechnol.">
        <title>Genome sequence and identification of candidate vaccine antigens from the animal pathogen Dichelobacter nodosus.</title>
        <authorList>
            <person name="Myers G.S.A."/>
            <person name="Parker D."/>
            <person name="Al-Hasani K."/>
            <person name="Kennan R.M."/>
            <person name="Seemann T."/>
            <person name="Ren Q."/>
            <person name="Badger J.H."/>
            <person name="Selengut J.D."/>
            <person name="Deboy R.T."/>
            <person name="Tettelin H."/>
            <person name="Boyce J.D."/>
            <person name="McCarl V.P."/>
            <person name="Han X."/>
            <person name="Nelson W.C."/>
            <person name="Madupu R."/>
            <person name="Mohamoud Y."/>
            <person name="Holley T."/>
            <person name="Fedorova N."/>
            <person name="Khouri H."/>
            <person name="Bottomley S.P."/>
            <person name="Whittington R.J."/>
            <person name="Adler B."/>
            <person name="Songer J.G."/>
            <person name="Rood J.I."/>
            <person name="Paulsen I.T."/>
        </authorList>
    </citation>
    <scope>NUCLEOTIDE SEQUENCE [LARGE SCALE GENOMIC DNA]</scope>
    <source>
        <strain>VCS1703A</strain>
    </source>
</reference>
<name>UVRC_DICNV</name>
<comment type="function">
    <text evidence="1">The UvrABC repair system catalyzes the recognition and processing of DNA lesions. UvrC both incises the 5' and 3' sides of the lesion. The N-terminal half is responsible for the 3' incision and the C-terminal half is responsible for the 5' incision.</text>
</comment>
<comment type="subunit">
    <text evidence="1">Interacts with UvrB in an incision complex.</text>
</comment>
<comment type="subcellular location">
    <subcellularLocation>
        <location evidence="1">Cytoplasm</location>
    </subcellularLocation>
</comment>
<comment type="similarity">
    <text evidence="1">Belongs to the UvrC family.</text>
</comment>
<accession>A5EW70</accession>
<keyword id="KW-0963">Cytoplasm</keyword>
<keyword id="KW-0227">DNA damage</keyword>
<keyword id="KW-0228">DNA excision</keyword>
<keyword id="KW-0234">DNA repair</keyword>
<keyword id="KW-0267">Excision nuclease</keyword>
<keyword id="KW-1185">Reference proteome</keyword>
<keyword id="KW-0742">SOS response</keyword>
<sequence length="607" mass="68971">MNNSGFAFDPDVFLSHVSTLSGVYQMRDQNGTVLYVGKAKNLRQRLSHYFQKTGLSVKTRALMRAVYDIQTTSTPTEAEALLLENNLIKQYQPKFNILLRDDKSYPYICLSQHDFPRLFLYRGARKNGDFFGPYPNVQSAHHALAILQKVFRLRPCLDSFFKNRSRPCLQYQIKRCYAPCVGKISAEMYAQTVQHARDFLTGNSEHLLQTLTEHMLQASAAQQYERAAIVRDQISELRTIQQKQSMVVYAANVDVLAVATAYGKACVQVLFFRDGHSVTSQAFFPKLPELLPAGAILQAFIGQFYHQRPVPSQIVLSEALPDMDAVSEFLSQMSAHTVTLTTQPRAIRKKWLRMTQENARLNLRLHLAQKLSMHERFKALAQAFDWQKMPQRLECVDISHMQGEYTVASCVVFDRRGAVKSDYRRYKINGITGGDDYAAMKQVIKRRFARLKKGEGVMPDVFFVDGGRGQLQQAIAVFEEMQIEGVQLIGVAKGEGRKAGLEQFWFPHENRPRTLPADSQAMQLIIHIRDEAHRFAISAHRRGRDKKVRVSLLEEIPNIGRKRRQALLQHFGNLAGLMQASPEDITRVPGISVKLAAQIYAALHQGE</sequence>
<dbReference type="EMBL" id="CP000513">
    <property type="protein sequence ID" value="ABQ13425.1"/>
    <property type="molecule type" value="Genomic_DNA"/>
</dbReference>
<dbReference type="RefSeq" id="WP_012030649.1">
    <property type="nucleotide sequence ID" value="NC_009446.1"/>
</dbReference>
<dbReference type="SMR" id="A5EW70"/>
<dbReference type="STRING" id="246195.DNO_0305"/>
<dbReference type="KEGG" id="dno:DNO_0305"/>
<dbReference type="eggNOG" id="COG0322">
    <property type="taxonomic scope" value="Bacteria"/>
</dbReference>
<dbReference type="HOGENOM" id="CLU_014841_3_0_6"/>
<dbReference type="OrthoDB" id="9804933at2"/>
<dbReference type="Proteomes" id="UP000000248">
    <property type="component" value="Chromosome"/>
</dbReference>
<dbReference type="GO" id="GO:0005737">
    <property type="term" value="C:cytoplasm"/>
    <property type="evidence" value="ECO:0007669"/>
    <property type="project" value="UniProtKB-SubCell"/>
</dbReference>
<dbReference type="GO" id="GO:0009380">
    <property type="term" value="C:excinuclease repair complex"/>
    <property type="evidence" value="ECO:0007669"/>
    <property type="project" value="InterPro"/>
</dbReference>
<dbReference type="GO" id="GO:0003677">
    <property type="term" value="F:DNA binding"/>
    <property type="evidence" value="ECO:0007669"/>
    <property type="project" value="UniProtKB-UniRule"/>
</dbReference>
<dbReference type="GO" id="GO:0009381">
    <property type="term" value="F:excinuclease ABC activity"/>
    <property type="evidence" value="ECO:0007669"/>
    <property type="project" value="UniProtKB-UniRule"/>
</dbReference>
<dbReference type="GO" id="GO:0006289">
    <property type="term" value="P:nucleotide-excision repair"/>
    <property type="evidence" value="ECO:0007669"/>
    <property type="project" value="UniProtKB-UniRule"/>
</dbReference>
<dbReference type="GO" id="GO:0009432">
    <property type="term" value="P:SOS response"/>
    <property type="evidence" value="ECO:0007669"/>
    <property type="project" value="UniProtKB-UniRule"/>
</dbReference>
<dbReference type="CDD" id="cd10434">
    <property type="entry name" value="GIY-YIG_UvrC_Cho"/>
    <property type="match status" value="1"/>
</dbReference>
<dbReference type="FunFam" id="3.30.420.340:FF:000001">
    <property type="entry name" value="UvrABC system protein C"/>
    <property type="match status" value="1"/>
</dbReference>
<dbReference type="FunFam" id="3.40.1440.10:FF:000001">
    <property type="entry name" value="UvrABC system protein C"/>
    <property type="match status" value="1"/>
</dbReference>
<dbReference type="Gene3D" id="1.10.150.20">
    <property type="entry name" value="5' to 3' exonuclease, C-terminal subdomain"/>
    <property type="match status" value="1"/>
</dbReference>
<dbReference type="Gene3D" id="3.40.1440.10">
    <property type="entry name" value="GIY-YIG endonuclease"/>
    <property type="match status" value="1"/>
</dbReference>
<dbReference type="Gene3D" id="4.10.860.10">
    <property type="entry name" value="UVR domain"/>
    <property type="match status" value="1"/>
</dbReference>
<dbReference type="Gene3D" id="3.30.420.340">
    <property type="entry name" value="UvrC, RNAse H endonuclease domain"/>
    <property type="match status" value="1"/>
</dbReference>
<dbReference type="HAMAP" id="MF_00203">
    <property type="entry name" value="UvrC"/>
    <property type="match status" value="1"/>
</dbReference>
<dbReference type="InterPro" id="IPR000305">
    <property type="entry name" value="GIY-YIG_endonuc"/>
</dbReference>
<dbReference type="InterPro" id="IPR035901">
    <property type="entry name" value="GIY-YIG_endonuc_sf"/>
</dbReference>
<dbReference type="InterPro" id="IPR047296">
    <property type="entry name" value="GIY-YIG_UvrC_Cho"/>
</dbReference>
<dbReference type="InterPro" id="IPR003583">
    <property type="entry name" value="Hlx-hairpin-Hlx_DNA-bd_motif"/>
</dbReference>
<dbReference type="InterPro" id="IPR010994">
    <property type="entry name" value="RuvA_2-like"/>
</dbReference>
<dbReference type="InterPro" id="IPR001943">
    <property type="entry name" value="UVR_dom"/>
</dbReference>
<dbReference type="InterPro" id="IPR036876">
    <property type="entry name" value="UVR_dom_sf"/>
</dbReference>
<dbReference type="InterPro" id="IPR050066">
    <property type="entry name" value="UvrABC_protein_C"/>
</dbReference>
<dbReference type="InterPro" id="IPR004791">
    <property type="entry name" value="UvrC"/>
</dbReference>
<dbReference type="InterPro" id="IPR001162">
    <property type="entry name" value="UvrC_RNase_H_dom"/>
</dbReference>
<dbReference type="InterPro" id="IPR038476">
    <property type="entry name" value="UvrC_RNase_H_dom_sf"/>
</dbReference>
<dbReference type="NCBIfam" id="NF001824">
    <property type="entry name" value="PRK00558.1-5"/>
    <property type="match status" value="1"/>
</dbReference>
<dbReference type="NCBIfam" id="TIGR00194">
    <property type="entry name" value="uvrC"/>
    <property type="match status" value="1"/>
</dbReference>
<dbReference type="PANTHER" id="PTHR30562:SF1">
    <property type="entry name" value="UVRABC SYSTEM PROTEIN C"/>
    <property type="match status" value="1"/>
</dbReference>
<dbReference type="PANTHER" id="PTHR30562">
    <property type="entry name" value="UVRC/OXIDOREDUCTASE"/>
    <property type="match status" value="1"/>
</dbReference>
<dbReference type="Pfam" id="PF01541">
    <property type="entry name" value="GIY-YIG"/>
    <property type="match status" value="1"/>
</dbReference>
<dbReference type="Pfam" id="PF14520">
    <property type="entry name" value="HHH_5"/>
    <property type="match status" value="1"/>
</dbReference>
<dbReference type="Pfam" id="PF02151">
    <property type="entry name" value="UVR"/>
    <property type="match status" value="1"/>
</dbReference>
<dbReference type="Pfam" id="PF22920">
    <property type="entry name" value="UvrC_RNaseH"/>
    <property type="match status" value="1"/>
</dbReference>
<dbReference type="Pfam" id="PF08459">
    <property type="entry name" value="UvrC_RNaseH_dom"/>
    <property type="match status" value="1"/>
</dbReference>
<dbReference type="SMART" id="SM00465">
    <property type="entry name" value="GIYc"/>
    <property type="match status" value="1"/>
</dbReference>
<dbReference type="SMART" id="SM00278">
    <property type="entry name" value="HhH1"/>
    <property type="match status" value="2"/>
</dbReference>
<dbReference type="SUPFAM" id="SSF46600">
    <property type="entry name" value="C-terminal UvrC-binding domain of UvrB"/>
    <property type="match status" value="1"/>
</dbReference>
<dbReference type="SUPFAM" id="SSF82771">
    <property type="entry name" value="GIY-YIG endonuclease"/>
    <property type="match status" value="1"/>
</dbReference>
<dbReference type="SUPFAM" id="SSF47781">
    <property type="entry name" value="RuvA domain 2-like"/>
    <property type="match status" value="1"/>
</dbReference>
<dbReference type="PROSITE" id="PS50164">
    <property type="entry name" value="GIY_YIG"/>
    <property type="match status" value="1"/>
</dbReference>
<dbReference type="PROSITE" id="PS50151">
    <property type="entry name" value="UVR"/>
    <property type="match status" value="1"/>
</dbReference>
<dbReference type="PROSITE" id="PS50165">
    <property type="entry name" value="UVRC"/>
    <property type="match status" value="1"/>
</dbReference>
<organism>
    <name type="scientific">Dichelobacter nodosus (strain VCS1703A)</name>
    <dbReference type="NCBI Taxonomy" id="246195"/>
    <lineage>
        <taxon>Bacteria</taxon>
        <taxon>Pseudomonadati</taxon>
        <taxon>Pseudomonadota</taxon>
        <taxon>Gammaproteobacteria</taxon>
        <taxon>Cardiobacteriales</taxon>
        <taxon>Cardiobacteriaceae</taxon>
        <taxon>Dichelobacter</taxon>
    </lineage>
</organism>
<feature type="chain" id="PRO_1000099475" description="UvrABC system protein C">
    <location>
        <begin position="1"/>
        <end position="607"/>
    </location>
</feature>
<feature type="domain" description="GIY-YIG" evidence="1">
    <location>
        <begin position="19"/>
        <end position="97"/>
    </location>
</feature>
<feature type="domain" description="UVR" evidence="1">
    <location>
        <begin position="205"/>
        <end position="240"/>
    </location>
</feature>
<evidence type="ECO:0000255" key="1">
    <source>
        <dbReference type="HAMAP-Rule" id="MF_00203"/>
    </source>
</evidence>